<evidence type="ECO:0000255" key="1">
    <source>
        <dbReference type="PROSITE-ProRule" id="PRU00582"/>
    </source>
</evidence>
<evidence type="ECO:0000269" key="2">
    <source>
    </source>
</evidence>
<evidence type="ECO:0000305" key="3"/>
<evidence type="ECO:0007829" key="4">
    <source>
        <dbReference type="PDB" id="1BX7"/>
    </source>
</evidence>
<evidence type="ECO:0007829" key="5">
    <source>
        <dbReference type="PDB" id="1BX8"/>
    </source>
</evidence>
<evidence type="ECO:0007829" key="6">
    <source>
        <dbReference type="PDB" id="1HIA"/>
    </source>
</evidence>
<name>ANTA_HIRME</name>
<comment type="function">
    <text>Acts as an inhibitor of tissue kallikrein, trypsin, chymotrypsin and neutrophil cathepsin G.</text>
</comment>
<comment type="subcellular location">
    <subcellularLocation>
        <location>Secreted</location>
    </subcellularLocation>
</comment>
<comment type="similarity">
    <text evidence="3">Belongs to the protease inhibitor I15 (antistasin) family.</text>
</comment>
<dbReference type="PDB" id="1BX7">
    <property type="method" value="X-ray"/>
    <property type="resolution" value="1.20 A"/>
    <property type="chains" value="A=1-55"/>
</dbReference>
<dbReference type="PDB" id="1BX8">
    <property type="method" value="X-ray"/>
    <property type="resolution" value="1.40 A"/>
    <property type="chains" value="A=1-55"/>
</dbReference>
<dbReference type="PDB" id="1HIA">
    <property type="method" value="X-ray"/>
    <property type="resolution" value="2.40 A"/>
    <property type="chains" value="I/J=5-52"/>
</dbReference>
<dbReference type="PDBsum" id="1BX7"/>
<dbReference type="PDBsum" id="1BX8"/>
<dbReference type="PDBsum" id="1HIA"/>
<dbReference type="SMR" id="P80302"/>
<dbReference type="MEROPS" id="I15.001"/>
<dbReference type="EvolutionaryTrace" id="P80302"/>
<dbReference type="GO" id="GO:0005576">
    <property type="term" value="C:extracellular region"/>
    <property type="evidence" value="ECO:0007669"/>
    <property type="project" value="UniProtKB-SubCell"/>
</dbReference>
<dbReference type="GO" id="GO:0008201">
    <property type="term" value="F:heparin binding"/>
    <property type="evidence" value="ECO:0007669"/>
    <property type="project" value="UniProtKB-KW"/>
</dbReference>
<dbReference type="GO" id="GO:0004867">
    <property type="term" value="F:serine-type endopeptidase inhibitor activity"/>
    <property type="evidence" value="ECO:0007669"/>
    <property type="project" value="UniProtKB-KW"/>
</dbReference>
<dbReference type="GO" id="GO:0050819">
    <property type="term" value="P:negative regulation of coagulation"/>
    <property type="evidence" value="ECO:0007669"/>
    <property type="project" value="InterPro"/>
</dbReference>
<dbReference type="Gene3D" id="2.10.22.10">
    <property type="entry name" value="Antistasin, domain 1"/>
    <property type="match status" value="1"/>
</dbReference>
<dbReference type="InterPro" id="IPR004094">
    <property type="entry name" value="Antistasin-like"/>
</dbReference>
<dbReference type="InterPro" id="IPR011061">
    <property type="entry name" value="Hirudin/antistatin"/>
</dbReference>
<dbReference type="InterPro" id="IPR008086">
    <property type="entry name" value="Prot_inh_I15_antistasin_leech"/>
</dbReference>
<dbReference type="Pfam" id="PF02822">
    <property type="entry name" value="Antistasin"/>
    <property type="match status" value="1"/>
</dbReference>
<dbReference type="PRINTS" id="PR01706">
    <property type="entry name" value="ANTISTASIN"/>
</dbReference>
<dbReference type="SUPFAM" id="SSF57262">
    <property type="entry name" value="Leech antihemostatic proteins"/>
    <property type="match status" value="1"/>
</dbReference>
<dbReference type="PROSITE" id="PS51252">
    <property type="entry name" value="ANTISTASIN"/>
    <property type="match status" value="1"/>
</dbReference>
<proteinExistence type="evidence at protein level"/>
<keyword id="KW-0002">3D-structure</keyword>
<keyword id="KW-0903">Direct protein sequencing</keyword>
<keyword id="KW-1015">Disulfide bond</keyword>
<keyword id="KW-0358">Heparin-binding</keyword>
<keyword id="KW-0646">Protease inhibitor</keyword>
<keyword id="KW-0964">Secreted</keyword>
<keyword id="KW-0722">Serine protease inhibitor</keyword>
<reference key="1">
    <citation type="journal article" date="1994" name="Eur. J. Biochem.">
        <title>Isolation and characterization of hirustasin, an antistasin-type serine-proteinase inhibitor from the medical leech Hirudo medicinalis.</title>
        <authorList>
            <person name="Soellner C."/>
            <person name="Mentele R."/>
            <person name="Eckerskorn C."/>
            <person name="Fritz H."/>
            <person name="Sommerhoff C.P."/>
        </authorList>
    </citation>
    <scope>PROTEIN SEQUENCE</scope>
</reference>
<reference key="2">
    <citation type="journal article" date="1997" name="Structure">
        <title>A new structural class of serine protease inhibitors revealed by the structure of the hirustasin-kallikrein complex.</title>
        <authorList>
            <person name="Mittl P.R.E."/>
            <person name="di Marco S."/>
            <person name="Fendrich G."/>
            <person name="Pohlig G."/>
            <person name="Heim J."/>
            <person name="Sommerhoff C."/>
            <person name="Fritz H."/>
            <person name="Priestle J.P."/>
            <person name="Gruetter M.G."/>
        </authorList>
    </citation>
    <scope>X-RAY CRYSTALLOGRAPHY (2.4 ANGSTROMS) OF COMPLEX WITH KALLIKREIN</scope>
</reference>
<reference key="3">
    <citation type="journal article" date="1997" name="Structure">
        <authorList>
            <person name="Mittl P.R.E."/>
            <person name="di Marco S."/>
            <person name="Fendrich G."/>
            <person name="Pohlig G."/>
            <person name="Heim J."/>
            <person name="Sommerhoff C."/>
            <person name="Fritz H."/>
            <person name="Priestle J.P."/>
            <person name="Grutter M.G."/>
        </authorList>
    </citation>
    <scope>ERRATUM OF PUBMED:9032072</scope>
</reference>
<reference key="4">
    <citation type="journal article" date="1999" name="Structure">
        <title>The 1.2 A crystal structure of hirustasin reveals the intrinsic flexibility of a family of highly disulphide-bridged inhibitors.</title>
        <authorList>
            <person name="Uson I."/>
            <person name="Sheldrick G.M."/>
            <person name="de La Fortelle E."/>
            <person name="Bricogne G."/>
            <person name="Di Marco S."/>
            <person name="Priestle J.P."/>
            <person name="Gruetter M.G."/>
            <person name="Mittl P.R."/>
        </authorList>
    </citation>
    <scope>X-RAY CRYSTALLOGRAPHY (1.2 ANGSTROMS)</scope>
    <scope>DISULFIDE BONDS</scope>
</reference>
<sequence>TQGNTCGGETCSAAQVCLKGKCVCNEVHCRIRCKYGLKKDENGCEYPCSCAKASQ</sequence>
<accession>P80302</accession>
<protein>
    <recommendedName>
        <fullName>Hirustasin</fullName>
    </recommendedName>
</protein>
<organism>
    <name type="scientific">Hirudo medicinalis</name>
    <name type="common">Medicinal leech</name>
    <dbReference type="NCBI Taxonomy" id="6421"/>
    <lineage>
        <taxon>Eukaryota</taxon>
        <taxon>Metazoa</taxon>
        <taxon>Spiralia</taxon>
        <taxon>Lophotrochozoa</taxon>
        <taxon>Annelida</taxon>
        <taxon>Clitellata</taxon>
        <taxon>Hirudinea</taxon>
        <taxon>Hirudinida</taxon>
        <taxon>Hirudiniformes</taxon>
        <taxon>Hirudinidae</taxon>
        <taxon>Hirudo</taxon>
    </lineage>
</organism>
<feature type="chain" id="PRO_0000155194" description="Hirustasin">
    <location>
        <begin position="1"/>
        <end position="55"/>
    </location>
</feature>
<feature type="domain" description="Antistasin-like" evidence="1">
    <location>
        <begin position="24"/>
        <end position="50"/>
    </location>
</feature>
<feature type="site" description="Reactive bond">
    <location>
        <begin position="30"/>
        <end position="31"/>
    </location>
</feature>
<feature type="disulfide bond" evidence="2">
    <location>
        <begin position="6"/>
        <end position="17"/>
    </location>
</feature>
<feature type="disulfide bond" evidence="2">
    <location>
        <begin position="11"/>
        <end position="22"/>
    </location>
</feature>
<feature type="disulfide bond" evidence="2">
    <location>
        <begin position="24"/>
        <end position="44"/>
    </location>
</feature>
<feature type="disulfide bond" evidence="2">
    <location>
        <begin position="29"/>
        <end position="48"/>
    </location>
</feature>
<feature type="disulfide bond" evidence="2">
    <location>
        <begin position="33"/>
        <end position="50"/>
    </location>
</feature>
<feature type="strand" evidence="5">
    <location>
        <begin position="7"/>
        <end position="9"/>
    </location>
</feature>
<feature type="strand" evidence="4">
    <location>
        <begin position="15"/>
        <end position="18"/>
    </location>
</feature>
<feature type="strand" evidence="4">
    <location>
        <begin position="21"/>
        <end position="24"/>
    </location>
</feature>
<feature type="strand" evidence="6">
    <location>
        <begin position="27"/>
        <end position="30"/>
    </location>
</feature>
<feature type="strand" evidence="6">
    <location>
        <begin position="37"/>
        <end position="39"/>
    </location>
</feature>
<feature type="strand" evidence="6">
    <location>
        <begin position="45"/>
        <end position="50"/>
    </location>
</feature>